<organism>
    <name type="scientific">Saccharomyces cerevisiae (strain ATCC 204508 / S288c)</name>
    <name type="common">Baker's yeast</name>
    <dbReference type="NCBI Taxonomy" id="559292"/>
    <lineage>
        <taxon>Eukaryota</taxon>
        <taxon>Fungi</taxon>
        <taxon>Dikarya</taxon>
        <taxon>Ascomycota</taxon>
        <taxon>Saccharomycotina</taxon>
        <taxon>Saccharomycetes</taxon>
        <taxon>Saccharomycetales</taxon>
        <taxon>Saccharomycetaceae</taxon>
        <taxon>Saccharomyces</taxon>
    </lineage>
</organism>
<proteinExistence type="uncertain"/>
<gene>
    <name type="ordered locus">YKL030W</name>
    <name type="ORF">YKL243</name>
</gene>
<accession>P36099</accession>
<name>YKD0_YEAST</name>
<dbReference type="EMBL" id="Z28029">
    <property type="protein sequence ID" value="CAA81864.1"/>
    <property type="molecule type" value="Genomic_DNA"/>
</dbReference>
<dbReference type="EMBL" id="X71622">
    <property type="status" value="NOT_ANNOTATED_CDS"/>
    <property type="molecule type" value="Genomic_DNA"/>
</dbReference>
<dbReference type="PIR" id="S37847">
    <property type="entry name" value="S37847"/>
</dbReference>
<dbReference type="PaxDb" id="4932-YKL030W"/>
<dbReference type="EnsemblFungi" id="YKL030W_mRNA">
    <property type="protein sequence ID" value="YKL030W"/>
    <property type="gene ID" value="YKL030W"/>
</dbReference>
<dbReference type="AGR" id="SGD:S000001513"/>
<dbReference type="SGD" id="S000001513">
    <property type="gene designation" value="YKL030W"/>
</dbReference>
<dbReference type="HOGENOM" id="CLU_1361380_0_0_1"/>
<feature type="chain" id="PRO_0000203188" description="Putative uncharacterized protein YKL030W">
    <location>
        <begin position="1"/>
        <end position="201"/>
    </location>
</feature>
<sequence length="201" mass="22956">MFLCYCCCCYCFYYCIIVLLLYYYYYYYYYYYYGMSSIIFFLKIKKKIVQIYIFIYYSIWFFFFKCRRWLCFVYNWLVCTDGSCWTLIIGLYTGSHIWALTHCKHSSKSRGTLTVSPGAPPGTCSCSIRAVPSSSACKITAVARRAEVLVMVSRPGSNPGLESPSLSGDNSASWSTAAEIILSVMVVARDSTAPKPIPGKE</sequence>
<protein>
    <recommendedName>
        <fullName>Putative uncharacterized protein YKL030W</fullName>
    </recommendedName>
</protein>
<evidence type="ECO:0000305" key="1"/>
<evidence type="ECO:0000305" key="2">
    <source>
    </source>
</evidence>
<reference key="1">
    <citation type="journal article" date="1994" name="Nature">
        <title>Complete DNA sequence of yeast chromosome XI.</title>
        <authorList>
            <person name="Dujon B."/>
            <person name="Alexandraki D."/>
            <person name="Andre B."/>
            <person name="Ansorge W."/>
            <person name="Baladron V."/>
            <person name="Ballesta J.P.G."/>
            <person name="Banrevi A."/>
            <person name="Bolle P.-A."/>
            <person name="Bolotin-Fukuhara M."/>
            <person name="Bossier P."/>
            <person name="Bou G."/>
            <person name="Boyer J."/>
            <person name="Buitrago M.J."/>
            <person name="Cheret G."/>
            <person name="Colleaux L."/>
            <person name="Daignan-Fornier B."/>
            <person name="del Rey F."/>
            <person name="Dion C."/>
            <person name="Domdey H."/>
            <person name="Duesterhoeft A."/>
            <person name="Duesterhus S."/>
            <person name="Entian K.-D."/>
            <person name="Erfle H."/>
            <person name="Esteban P.F."/>
            <person name="Feldmann H."/>
            <person name="Fernandes L."/>
            <person name="Fobo G.M."/>
            <person name="Fritz C."/>
            <person name="Fukuhara H."/>
            <person name="Gabel C."/>
            <person name="Gaillon L."/>
            <person name="Garcia-Cantalejo J.M."/>
            <person name="Garcia-Ramirez J.J."/>
            <person name="Gent M.E."/>
            <person name="Ghazvini M."/>
            <person name="Goffeau A."/>
            <person name="Gonzalez A."/>
            <person name="Grothues D."/>
            <person name="Guerreiro P."/>
            <person name="Hegemann J.H."/>
            <person name="Hewitt N."/>
            <person name="Hilger F."/>
            <person name="Hollenberg C.P."/>
            <person name="Horaitis O."/>
            <person name="Indge K.J."/>
            <person name="Jacquier A."/>
            <person name="James C.M."/>
            <person name="Jauniaux J.-C."/>
            <person name="Jimenez A."/>
            <person name="Keuchel H."/>
            <person name="Kirchrath L."/>
            <person name="Kleine K."/>
            <person name="Koetter P."/>
            <person name="Legrain P."/>
            <person name="Liebl S."/>
            <person name="Louis E.J."/>
            <person name="Maia e Silva A."/>
            <person name="Marck C."/>
            <person name="Monnier A.-L."/>
            <person name="Moestl D."/>
            <person name="Mueller S."/>
            <person name="Obermaier B."/>
            <person name="Oliver S.G."/>
            <person name="Pallier C."/>
            <person name="Pascolo S."/>
            <person name="Pfeiffer F."/>
            <person name="Philippsen P."/>
            <person name="Planta R.J."/>
            <person name="Pohl F.M."/>
            <person name="Pohl T.M."/>
            <person name="Poehlmann R."/>
            <person name="Portetelle D."/>
            <person name="Purnelle B."/>
            <person name="Puzos V."/>
            <person name="Ramezani Rad M."/>
            <person name="Rasmussen S.W."/>
            <person name="Remacha M.A."/>
            <person name="Revuelta J.L."/>
            <person name="Richard G.-F."/>
            <person name="Rieger M."/>
            <person name="Rodrigues-Pousada C."/>
            <person name="Rose M."/>
            <person name="Rupp T."/>
            <person name="Santos M.A."/>
            <person name="Schwager C."/>
            <person name="Sensen C."/>
            <person name="Skala J."/>
            <person name="Soares H."/>
            <person name="Sor F."/>
            <person name="Stegemann J."/>
            <person name="Tettelin H."/>
            <person name="Thierry A."/>
            <person name="Tzermia M."/>
            <person name="Urrestarazu L.A."/>
            <person name="van Dyck L."/>
            <person name="van Vliet-Reedijk J.C."/>
            <person name="Valens M."/>
            <person name="Vandenbol M."/>
            <person name="Vilela C."/>
            <person name="Vissers S."/>
            <person name="von Wettstein D."/>
            <person name="Voss H."/>
            <person name="Wiemann S."/>
            <person name="Xu G."/>
            <person name="Zimmermann J."/>
            <person name="Haasemann M."/>
            <person name="Becker I."/>
            <person name="Mewes H.-W."/>
        </authorList>
    </citation>
    <scope>NUCLEOTIDE SEQUENCE [LARGE SCALE GENOMIC DNA]</scope>
    <source>
        <strain>ATCC 204508 / S288c</strain>
    </source>
</reference>
<reference key="2">
    <citation type="journal article" date="2014" name="G3 (Bethesda)">
        <title>The reference genome sequence of Saccharomyces cerevisiae: Then and now.</title>
        <authorList>
            <person name="Engel S.R."/>
            <person name="Dietrich F.S."/>
            <person name="Fisk D.G."/>
            <person name="Binkley G."/>
            <person name="Balakrishnan R."/>
            <person name="Costanzo M.C."/>
            <person name="Dwight S.S."/>
            <person name="Hitz B.C."/>
            <person name="Karra K."/>
            <person name="Nash R.S."/>
            <person name="Weng S."/>
            <person name="Wong E.D."/>
            <person name="Lloyd P."/>
            <person name="Skrzypek M.S."/>
            <person name="Miyasato S.R."/>
            <person name="Simison M."/>
            <person name="Cherry J.M."/>
        </authorList>
    </citation>
    <scope>GENOME REANNOTATION</scope>
    <source>
        <strain>ATCC 204508 / S288c</strain>
    </source>
</reference>
<reference key="3">
    <citation type="journal article" date="1994" name="Yeast">
        <title>Analysis of an 11.7 kb DNA fragment of chromosome XI reveals a new tRNA gene and four new open reading frames including a leucine zipper protein and a homologue to the yeast mitochondrial regulator ABF2.</title>
        <authorList>
            <person name="Purnelle B."/>
            <person name="Skala J."/>
            <person name="van Dyck L."/>
            <person name="Goffeau A."/>
        </authorList>
    </citation>
    <scope>NUCLEOTIDE SEQUENCE [GENOMIC DNA] OF 1-180</scope>
    <source>
        <strain>ATCC 204508 / S288c</strain>
    </source>
</reference>
<comment type="miscellaneous">
    <text evidence="1">Partially overlaps MAE1.</text>
</comment>
<comment type="caution">
    <text evidence="2">Product of a dubious gene prediction unlikely to encode a functional protein. Because of that it is not part of the S.cerevisiae S288c complete/reference proteome set.</text>
</comment>